<feature type="chain" id="PRO_0000340191" description="Sulfate adenylyltransferase subunit 2">
    <location>
        <begin position="1"/>
        <end position="305"/>
    </location>
</feature>
<feature type="region of interest" description="Disordered" evidence="2">
    <location>
        <begin position="283"/>
        <end position="305"/>
    </location>
</feature>
<proteinExistence type="inferred from homology"/>
<keyword id="KW-0067">ATP-binding</keyword>
<keyword id="KW-0547">Nucleotide-binding</keyword>
<keyword id="KW-0548">Nucleotidyltransferase</keyword>
<keyword id="KW-0808">Transferase</keyword>
<comment type="function">
    <text evidence="1">With CysN forms the ATP sulfurylase (ATPS) that catalyzes the adenylation of sulfate producing adenosine 5'-phosphosulfate (APS) and diphosphate, the first enzymatic step in sulfur assimilation pathway. APS synthesis involves the formation of a high-energy phosphoric-sulfuric acid anhydride bond driven by GTP hydrolysis by CysN coupled to ATP hydrolysis by CysD.</text>
</comment>
<comment type="catalytic activity">
    <reaction evidence="1">
        <text>sulfate + ATP + H(+) = adenosine 5'-phosphosulfate + diphosphate</text>
        <dbReference type="Rhea" id="RHEA:18133"/>
        <dbReference type="ChEBI" id="CHEBI:15378"/>
        <dbReference type="ChEBI" id="CHEBI:16189"/>
        <dbReference type="ChEBI" id="CHEBI:30616"/>
        <dbReference type="ChEBI" id="CHEBI:33019"/>
        <dbReference type="ChEBI" id="CHEBI:58243"/>
        <dbReference type="EC" id="2.7.7.4"/>
    </reaction>
</comment>
<comment type="pathway">
    <text evidence="1">Sulfur metabolism; hydrogen sulfide biosynthesis; sulfite from sulfate: step 1/3.</text>
</comment>
<comment type="subunit">
    <text evidence="1">Heterodimer composed of CysD, the smaller subunit, and CysN.</text>
</comment>
<comment type="similarity">
    <text evidence="1">Belongs to the PAPS reductase family. CysD subfamily.</text>
</comment>
<comment type="sequence caution" evidence="3">
    <conflict type="erroneous initiation">
        <sequence resource="EMBL-CDS" id="ABZ70879"/>
    </conflict>
</comment>
<accession>B0T3J3</accession>
<organism>
    <name type="scientific">Caulobacter sp. (strain K31)</name>
    <dbReference type="NCBI Taxonomy" id="366602"/>
    <lineage>
        <taxon>Bacteria</taxon>
        <taxon>Pseudomonadati</taxon>
        <taxon>Pseudomonadota</taxon>
        <taxon>Alphaproteobacteria</taxon>
        <taxon>Caulobacterales</taxon>
        <taxon>Caulobacteraceae</taxon>
        <taxon>Caulobacter</taxon>
    </lineage>
</organism>
<name>CYSD_CAUSK</name>
<protein>
    <recommendedName>
        <fullName evidence="1">Sulfate adenylyltransferase subunit 2</fullName>
        <ecNumber evidence="1">2.7.7.4</ecNumber>
    </recommendedName>
    <alternativeName>
        <fullName evidence="1">ATP-sulfurylase small subunit</fullName>
    </alternativeName>
    <alternativeName>
        <fullName evidence="1">Sulfate adenylate transferase</fullName>
        <shortName evidence="1">SAT</shortName>
    </alternativeName>
</protein>
<gene>
    <name evidence="1" type="primary">cysD</name>
    <name type="ordered locus">Caul_1750</name>
</gene>
<dbReference type="EC" id="2.7.7.4" evidence="1"/>
<dbReference type="EMBL" id="CP000927">
    <property type="protein sequence ID" value="ABZ70879.1"/>
    <property type="status" value="ALT_INIT"/>
    <property type="molecule type" value="Genomic_DNA"/>
</dbReference>
<dbReference type="SMR" id="B0T3J3"/>
<dbReference type="STRING" id="366602.Caul_1750"/>
<dbReference type="KEGG" id="cak:Caul_1750"/>
<dbReference type="eggNOG" id="COG0175">
    <property type="taxonomic scope" value="Bacteria"/>
</dbReference>
<dbReference type="HOGENOM" id="CLU_043026_0_0_5"/>
<dbReference type="OrthoDB" id="9772604at2"/>
<dbReference type="UniPathway" id="UPA00140">
    <property type="reaction ID" value="UER00204"/>
</dbReference>
<dbReference type="GO" id="GO:0005524">
    <property type="term" value="F:ATP binding"/>
    <property type="evidence" value="ECO:0007669"/>
    <property type="project" value="UniProtKB-KW"/>
</dbReference>
<dbReference type="GO" id="GO:0004781">
    <property type="term" value="F:sulfate adenylyltransferase (ATP) activity"/>
    <property type="evidence" value="ECO:0007669"/>
    <property type="project" value="UniProtKB-UniRule"/>
</dbReference>
<dbReference type="GO" id="GO:0070814">
    <property type="term" value="P:hydrogen sulfide biosynthetic process"/>
    <property type="evidence" value="ECO:0007669"/>
    <property type="project" value="UniProtKB-UniRule"/>
</dbReference>
<dbReference type="GO" id="GO:0000103">
    <property type="term" value="P:sulfate assimilation"/>
    <property type="evidence" value="ECO:0007669"/>
    <property type="project" value="UniProtKB-UniRule"/>
</dbReference>
<dbReference type="CDD" id="cd23946">
    <property type="entry name" value="Sulfate_adenylyltransferase_2"/>
    <property type="match status" value="1"/>
</dbReference>
<dbReference type="FunFam" id="3.40.50.620:FF:000002">
    <property type="entry name" value="Sulfate adenylyltransferase subunit 2"/>
    <property type="match status" value="1"/>
</dbReference>
<dbReference type="Gene3D" id="3.40.50.620">
    <property type="entry name" value="HUPs"/>
    <property type="match status" value="1"/>
</dbReference>
<dbReference type="HAMAP" id="MF_00064">
    <property type="entry name" value="Sulf_adenylyltr_sub2"/>
    <property type="match status" value="1"/>
</dbReference>
<dbReference type="InterPro" id="IPR002500">
    <property type="entry name" value="PAPS_reduct_dom"/>
</dbReference>
<dbReference type="InterPro" id="IPR014729">
    <property type="entry name" value="Rossmann-like_a/b/a_fold"/>
</dbReference>
<dbReference type="InterPro" id="IPR011784">
    <property type="entry name" value="SO4_adenylTrfase_ssu"/>
</dbReference>
<dbReference type="InterPro" id="IPR050128">
    <property type="entry name" value="Sulfate_adenylyltrnsfr_sub2"/>
</dbReference>
<dbReference type="NCBIfam" id="TIGR02039">
    <property type="entry name" value="CysD"/>
    <property type="match status" value="1"/>
</dbReference>
<dbReference type="NCBIfam" id="NF003587">
    <property type="entry name" value="PRK05253.1"/>
    <property type="match status" value="1"/>
</dbReference>
<dbReference type="NCBIfam" id="NF009214">
    <property type="entry name" value="PRK12563.1"/>
    <property type="match status" value="1"/>
</dbReference>
<dbReference type="PANTHER" id="PTHR43196">
    <property type="entry name" value="SULFATE ADENYLYLTRANSFERASE SUBUNIT 2"/>
    <property type="match status" value="1"/>
</dbReference>
<dbReference type="PANTHER" id="PTHR43196:SF1">
    <property type="entry name" value="SULFATE ADENYLYLTRANSFERASE SUBUNIT 2"/>
    <property type="match status" value="1"/>
</dbReference>
<dbReference type="Pfam" id="PF01507">
    <property type="entry name" value="PAPS_reduct"/>
    <property type="match status" value="1"/>
</dbReference>
<dbReference type="PIRSF" id="PIRSF002936">
    <property type="entry name" value="CysDAde_trans"/>
    <property type="match status" value="1"/>
</dbReference>
<dbReference type="SUPFAM" id="SSF52402">
    <property type="entry name" value="Adenine nucleotide alpha hydrolases-like"/>
    <property type="match status" value="1"/>
</dbReference>
<sequence length="305" mass="35010">MSVLSPARLTHLQRLEAESIHILREVAAECENPVMLYSIGKDSAVMLHLAAKAFYPSRPPFPLLHVDTTWKFRAMYELRDKVASDLGFDLLVHKNPEAEARGINPFDHGSALHTDLWKTEGLKQALAKYGFDAAFGGARRDEEKSRAKERVFSFRTTEQRWDPKDQRPELWKLYNTRKHPGESLRVFPISNWTELDVWQYIHLENIPIVPLYFAAERPVVARDGSLIMVDDDRFRLRPGEVPQMKSVRFRTLGCYPLTGAVESTAATLPQVIQEMLLTTTSERQGRVIDHDQSASMEKKKQEGYF</sequence>
<evidence type="ECO:0000255" key="1">
    <source>
        <dbReference type="HAMAP-Rule" id="MF_00064"/>
    </source>
</evidence>
<evidence type="ECO:0000256" key="2">
    <source>
        <dbReference type="SAM" id="MobiDB-lite"/>
    </source>
</evidence>
<evidence type="ECO:0000305" key="3"/>
<reference key="1">
    <citation type="submission" date="2008-01" db="EMBL/GenBank/DDBJ databases">
        <title>Complete sequence of chromosome of Caulobacter sp. K31.</title>
        <authorList>
            <consortium name="US DOE Joint Genome Institute"/>
            <person name="Copeland A."/>
            <person name="Lucas S."/>
            <person name="Lapidus A."/>
            <person name="Barry K."/>
            <person name="Glavina del Rio T."/>
            <person name="Dalin E."/>
            <person name="Tice H."/>
            <person name="Pitluck S."/>
            <person name="Bruce D."/>
            <person name="Goodwin L."/>
            <person name="Thompson L.S."/>
            <person name="Brettin T."/>
            <person name="Detter J.C."/>
            <person name="Han C."/>
            <person name="Schmutz J."/>
            <person name="Larimer F."/>
            <person name="Land M."/>
            <person name="Hauser L."/>
            <person name="Kyrpides N."/>
            <person name="Kim E."/>
            <person name="Stephens C."/>
            <person name="Richardson P."/>
        </authorList>
    </citation>
    <scope>NUCLEOTIDE SEQUENCE [LARGE SCALE GENOMIC DNA]</scope>
    <source>
        <strain>K31</strain>
    </source>
</reference>